<comment type="function">
    <text evidence="1">Catalyzes the dehydration of methylthioribulose-1-phosphate (MTRu-1-P) into 2,3-diketo-5-methylthiopentyl-1-phosphate (DK-MTP-1-P). Functions in the methionine salvage pathway. May play a role in apoptosis.</text>
</comment>
<comment type="catalytic activity">
    <reaction evidence="1">
        <text>5-(methylsulfanyl)-D-ribulose 1-phosphate = 5-methylsulfanyl-2,3-dioxopentyl phosphate + H2O</text>
        <dbReference type="Rhea" id="RHEA:15549"/>
        <dbReference type="ChEBI" id="CHEBI:15377"/>
        <dbReference type="ChEBI" id="CHEBI:58548"/>
        <dbReference type="ChEBI" id="CHEBI:58828"/>
        <dbReference type="EC" id="4.2.1.109"/>
    </reaction>
</comment>
<comment type="cofactor">
    <cofactor evidence="1">
        <name>Zn(2+)</name>
        <dbReference type="ChEBI" id="CHEBI:29105"/>
    </cofactor>
    <text evidence="1">Binds 1 zinc ion per subunit.</text>
</comment>
<comment type="pathway">
    <text evidence="1">Amino-acid biosynthesis; L-methionine biosynthesis via salvage pathway; L-methionine from S-methyl-5-thio-alpha-D-ribose 1-phosphate: step 2/6.</text>
</comment>
<comment type="subcellular location">
    <subcellularLocation>
        <location evidence="1">Cytoplasm</location>
    </subcellularLocation>
</comment>
<comment type="similarity">
    <text evidence="1">Belongs to the aldolase class II family. MtnB subfamily.</text>
</comment>
<reference key="1">
    <citation type="journal article" date="2010" name="BMC Genomics">
        <title>Salmo salar and Esox lucius full-length cDNA sequences reveal changes in evolutionary pressures on a post-tetraploidization genome.</title>
        <authorList>
            <person name="Leong J.S."/>
            <person name="Jantzen S.G."/>
            <person name="von Schalburg K.R."/>
            <person name="Cooper G.A."/>
            <person name="Messmer A.M."/>
            <person name="Liao N.Y."/>
            <person name="Munro S."/>
            <person name="Moore R."/>
            <person name="Holt R.A."/>
            <person name="Jones S.J."/>
            <person name="Davidson W.S."/>
            <person name="Koop B.F."/>
        </authorList>
    </citation>
    <scope>NUCLEOTIDE SEQUENCE [LARGE SCALE MRNA]</scope>
    <source>
        <tissue>Kidney</tissue>
    </source>
</reference>
<gene>
    <name evidence="1" type="primary">apip</name>
</gene>
<accession>C1BYA3</accession>
<dbReference type="EC" id="4.2.1.109" evidence="1"/>
<dbReference type="EMBL" id="BT079582">
    <property type="protein sequence ID" value="ACO14006.1"/>
    <property type="molecule type" value="mRNA"/>
</dbReference>
<dbReference type="SMR" id="C1BYA3"/>
<dbReference type="FunCoup" id="C1BYA3">
    <property type="interactions" value="855"/>
</dbReference>
<dbReference type="STRING" id="8010.ENSELUP00000021903"/>
<dbReference type="InParanoid" id="C1BYA3"/>
<dbReference type="UniPathway" id="UPA00904">
    <property type="reaction ID" value="UER00875"/>
</dbReference>
<dbReference type="Proteomes" id="UP000265140">
    <property type="component" value="Unassembled WGS sequence"/>
</dbReference>
<dbReference type="GO" id="GO:0005737">
    <property type="term" value="C:cytoplasm"/>
    <property type="evidence" value="ECO:0007669"/>
    <property type="project" value="UniProtKB-SubCell"/>
</dbReference>
<dbReference type="GO" id="GO:0046570">
    <property type="term" value="F:methylthioribulose 1-phosphate dehydratase activity"/>
    <property type="evidence" value="ECO:0000250"/>
    <property type="project" value="UniProtKB"/>
</dbReference>
<dbReference type="GO" id="GO:0008270">
    <property type="term" value="F:zinc ion binding"/>
    <property type="evidence" value="ECO:0000250"/>
    <property type="project" value="UniProtKB"/>
</dbReference>
<dbReference type="GO" id="GO:0006915">
    <property type="term" value="P:apoptotic process"/>
    <property type="evidence" value="ECO:0007669"/>
    <property type="project" value="UniProtKB-KW"/>
</dbReference>
<dbReference type="GO" id="GO:0019509">
    <property type="term" value="P:L-methionine salvage from methylthioadenosine"/>
    <property type="evidence" value="ECO:0000250"/>
    <property type="project" value="UniProtKB"/>
</dbReference>
<dbReference type="FunFam" id="3.40.225.10:FF:000003">
    <property type="entry name" value="Methylthioribulose-1-phosphate dehydratase"/>
    <property type="match status" value="1"/>
</dbReference>
<dbReference type="Gene3D" id="3.40.225.10">
    <property type="entry name" value="Class II aldolase/adducin N-terminal domain"/>
    <property type="match status" value="1"/>
</dbReference>
<dbReference type="HAMAP" id="MF_03116">
    <property type="entry name" value="Salvage_MtnB_euk"/>
    <property type="match status" value="1"/>
</dbReference>
<dbReference type="InterPro" id="IPR001303">
    <property type="entry name" value="Aldolase_II/adducin_N"/>
</dbReference>
<dbReference type="InterPro" id="IPR036409">
    <property type="entry name" value="Aldolase_II/adducin_N_sf"/>
</dbReference>
<dbReference type="InterPro" id="IPR017714">
    <property type="entry name" value="MethylthioRu-1-P_deHdtase_MtnB"/>
</dbReference>
<dbReference type="InterPro" id="IPR027514">
    <property type="entry name" value="Salvage_MtnB_euk"/>
</dbReference>
<dbReference type="NCBIfam" id="TIGR03328">
    <property type="entry name" value="salvage_mtnB"/>
    <property type="match status" value="1"/>
</dbReference>
<dbReference type="PANTHER" id="PTHR10640">
    <property type="entry name" value="METHYLTHIORIBULOSE-1-PHOSPHATE DEHYDRATASE"/>
    <property type="match status" value="1"/>
</dbReference>
<dbReference type="PANTHER" id="PTHR10640:SF7">
    <property type="entry name" value="METHYLTHIORIBULOSE-1-PHOSPHATE DEHYDRATASE"/>
    <property type="match status" value="1"/>
</dbReference>
<dbReference type="Pfam" id="PF00596">
    <property type="entry name" value="Aldolase_II"/>
    <property type="match status" value="1"/>
</dbReference>
<dbReference type="SMART" id="SM01007">
    <property type="entry name" value="Aldolase_II"/>
    <property type="match status" value="1"/>
</dbReference>
<dbReference type="SUPFAM" id="SSF53639">
    <property type="entry name" value="AraD/HMP-PK domain-like"/>
    <property type="match status" value="1"/>
</dbReference>
<proteinExistence type="evidence at transcript level"/>
<sequence>MVSSQEKMASISDIIQKDEDSGSEKTESQDKEHPRVLIPELCRLFYKLGWVTGTGGGISLRHGDQIYIAPSGVQKERLQPEDMFVCDVEERDICVPPAWKNLKKGQCTPLFMNAYTMRAAQAVIHTHSKAAVMATLFYPGKEFRITHQEMIKGIRKCTSGTNYRYDETLVVPIIENTPEEQDLKERMALAMEQYPESCAVLVRRHGVYVWGESWEKAKTMCECYDYLFDIAVKMKQCGLDPSAQPVEENLYYYVQQA</sequence>
<name>MTNB_ESOLU</name>
<feature type="chain" id="PRO_0000393773" description="Methylthioribulose-1-phosphate dehydratase">
    <location>
        <begin position="1"/>
        <end position="257"/>
    </location>
</feature>
<feature type="region of interest" description="Disordered" evidence="2">
    <location>
        <begin position="1"/>
        <end position="33"/>
    </location>
</feature>
<feature type="compositionally biased region" description="Basic and acidic residues" evidence="2">
    <location>
        <begin position="15"/>
        <end position="33"/>
    </location>
</feature>
<feature type="active site" description="Proton donor/acceptor" evidence="1">
    <location>
        <position position="149"/>
    </location>
</feature>
<feature type="binding site" evidence="1">
    <location>
        <position position="107"/>
    </location>
    <ligand>
        <name>substrate</name>
    </ligand>
</feature>
<feature type="binding site" evidence="1">
    <location>
        <position position="125"/>
    </location>
    <ligand>
        <name>Zn(2+)</name>
        <dbReference type="ChEBI" id="CHEBI:29105"/>
    </ligand>
</feature>
<feature type="binding site" evidence="1">
    <location>
        <position position="127"/>
    </location>
    <ligand>
        <name>Zn(2+)</name>
        <dbReference type="ChEBI" id="CHEBI:29105"/>
    </ligand>
</feature>
<feature type="binding site" evidence="1">
    <location>
        <position position="205"/>
    </location>
    <ligand>
        <name>Zn(2+)</name>
        <dbReference type="ChEBI" id="CHEBI:29105"/>
    </ligand>
</feature>
<organism>
    <name type="scientific">Esox lucius</name>
    <name type="common">Northern pike</name>
    <dbReference type="NCBI Taxonomy" id="8010"/>
    <lineage>
        <taxon>Eukaryota</taxon>
        <taxon>Metazoa</taxon>
        <taxon>Chordata</taxon>
        <taxon>Craniata</taxon>
        <taxon>Vertebrata</taxon>
        <taxon>Euteleostomi</taxon>
        <taxon>Actinopterygii</taxon>
        <taxon>Neopterygii</taxon>
        <taxon>Teleostei</taxon>
        <taxon>Protacanthopterygii</taxon>
        <taxon>Esociformes</taxon>
        <taxon>Esocidae</taxon>
        <taxon>Esox</taxon>
    </lineage>
</organism>
<evidence type="ECO:0000255" key="1">
    <source>
        <dbReference type="HAMAP-Rule" id="MF_03116"/>
    </source>
</evidence>
<evidence type="ECO:0000256" key="2">
    <source>
        <dbReference type="SAM" id="MobiDB-lite"/>
    </source>
</evidence>
<keyword id="KW-0028">Amino-acid biosynthesis</keyword>
<keyword id="KW-0053">Apoptosis</keyword>
<keyword id="KW-0963">Cytoplasm</keyword>
<keyword id="KW-0456">Lyase</keyword>
<keyword id="KW-0479">Metal-binding</keyword>
<keyword id="KW-0486">Methionine biosynthesis</keyword>
<keyword id="KW-1185">Reference proteome</keyword>
<keyword id="KW-0862">Zinc</keyword>
<protein>
    <recommendedName>
        <fullName evidence="1">Methylthioribulose-1-phosphate dehydratase</fullName>
        <shortName evidence="1">MTRu-1-P dehydratase</shortName>
        <ecNumber evidence="1">4.2.1.109</ecNumber>
    </recommendedName>
    <alternativeName>
        <fullName evidence="1">APAF1-interacting protein homolog</fullName>
    </alternativeName>
</protein>